<proteinExistence type="evidence at protein level"/>
<comment type="function">
    <text evidence="1">Lacks formylglycine generating activity and is unable to convert newly synthesized inactive sulfatases to their active form. Inhibits the activation of sulfatases by SUMF1.</text>
</comment>
<comment type="subunit">
    <text evidence="1">Homodimer and heterodimer with SUMF1.</text>
</comment>
<comment type="subcellular location">
    <subcellularLocation>
        <location evidence="1">Endoplasmic reticulum lumen</location>
    </subcellularLocation>
</comment>
<comment type="domain">
    <text evidence="1">The non-canonical ER retention motif mediates retention of the protein in the endoplasmic reticulum.</text>
</comment>
<comment type="similarity">
    <text evidence="5">Belongs to the sulfatase-modifying factor family.</text>
</comment>
<comment type="caution">
    <text evidence="5">Although strongly similar to formylglycine-generating enzyme, lacks the catalytic Cys residues that bind the catalytic copper. The catalytic copper is required to activate oxygen and catalyze oxidative C-H activation.</text>
</comment>
<comment type="sequence caution" evidence="5">
    <conflict type="erroneous initiation">
        <sequence resource="EMBL-CDS" id="BAE23615"/>
    </conflict>
    <text>Truncated N-terminus.</text>
</comment>
<protein>
    <recommendedName>
        <fullName evidence="5">Inactive C-alpha-formylglycine-generating enzyme 2</fullName>
    </recommendedName>
    <alternativeName>
        <fullName evidence="1">Sulfatase-modifying factor 2</fullName>
    </alternativeName>
</protein>
<gene>
    <name evidence="6" type="primary">Sumf2</name>
</gene>
<organism>
    <name type="scientific">Mus musculus</name>
    <name type="common">Mouse</name>
    <dbReference type="NCBI Taxonomy" id="10090"/>
    <lineage>
        <taxon>Eukaryota</taxon>
        <taxon>Metazoa</taxon>
        <taxon>Chordata</taxon>
        <taxon>Craniata</taxon>
        <taxon>Vertebrata</taxon>
        <taxon>Euteleostomi</taxon>
        <taxon>Mammalia</taxon>
        <taxon>Eutheria</taxon>
        <taxon>Euarchontoglires</taxon>
        <taxon>Glires</taxon>
        <taxon>Rodentia</taxon>
        <taxon>Myomorpha</taxon>
        <taxon>Muroidea</taxon>
        <taxon>Muridae</taxon>
        <taxon>Murinae</taxon>
        <taxon>Mus</taxon>
        <taxon>Mus</taxon>
    </lineage>
</organism>
<dbReference type="EMBL" id="AK076022">
    <property type="protein sequence ID" value="BAC36127.1"/>
    <property type="molecule type" value="mRNA"/>
</dbReference>
<dbReference type="EMBL" id="AK138300">
    <property type="protein sequence ID" value="BAE23615.1"/>
    <property type="status" value="ALT_INIT"/>
    <property type="molecule type" value="mRNA"/>
</dbReference>
<dbReference type="EMBL" id="AK157784">
    <property type="protein sequence ID" value="BAE34197.1"/>
    <property type="molecule type" value="mRNA"/>
</dbReference>
<dbReference type="EMBL" id="CH466529">
    <property type="protein sequence ID" value="EDL19497.1"/>
    <property type="molecule type" value="Genomic_DNA"/>
</dbReference>
<dbReference type="CCDS" id="CCDS19700.1"/>
<dbReference type="RefSeq" id="NP_080721.1">
    <property type="nucleotide sequence ID" value="NM_026445.3"/>
</dbReference>
<dbReference type="SMR" id="Q8BPG6"/>
<dbReference type="BioGRID" id="212525">
    <property type="interactions" value="6"/>
</dbReference>
<dbReference type="FunCoup" id="Q8BPG6">
    <property type="interactions" value="756"/>
</dbReference>
<dbReference type="STRING" id="10090.ENSMUSP00000126036"/>
<dbReference type="GlyCosmos" id="Q8BPG6">
    <property type="glycosylation" value="1 site, No reported glycans"/>
</dbReference>
<dbReference type="GlyGen" id="Q8BPG6">
    <property type="glycosylation" value="1 site"/>
</dbReference>
<dbReference type="PhosphoSitePlus" id="Q8BPG6"/>
<dbReference type="SwissPalm" id="Q8BPG6"/>
<dbReference type="REPRODUCTION-2DPAGE" id="IPI00223483"/>
<dbReference type="PaxDb" id="10090-ENSMUSP00000126036"/>
<dbReference type="ProteomicsDB" id="257506"/>
<dbReference type="Pumba" id="Q8BPG6"/>
<dbReference type="Ensembl" id="ENSMUST00000171300.8">
    <property type="protein sequence ID" value="ENSMUSP00000126036.2"/>
    <property type="gene ID" value="ENSMUSG00000025538.16"/>
</dbReference>
<dbReference type="GeneID" id="67902"/>
<dbReference type="KEGG" id="mmu:67902"/>
<dbReference type="UCSC" id="uc008ztk.1">
    <property type="organism name" value="mouse"/>
</dbReference>
<dbReference type="AGR" id="MGI:1915152"/>
<dbReference type="CTD" id="25870"/>
<dbReference type="MGI" id="MGI:1915152">
    <property type="gene designation" value="Sumf2"/>
</dbReference>
<dbReference type="VEuPathDB" id="HostDB:ENSMUSG00000025538"/>
<dbReference type="eggNOG" id="ENOG502QRY6">
    <property type="taxonomic scope" value="Eukaryota"/>
</dbReference>
<dbReference type="GeneTree" id="ENSGT00940000162897"/>
<dbReference type="HOGENOM" id="CLU_012431_4_2_1"/>
<dbReference type="InParanoid" id="Q8BPG6"/>
<dbReference type="OMA" id="CVRYRAS"/>
<dbReference type="OrthoDB" id="659at2759"/>
<dbReference type="PhylomeDB" id="Q8BPG6"/>
<dbReference type="TreeFam" id="TF324027"/>
<dbReference type="Reactome" id="R-MMU-1663150">
    <property type="pathway name" value="The activation of arylsulfatases"/>
</dbReference>
<dbReference type="Reactome" id="R-MMU-9840310">
    <property type="pathway name" value="Glycosphingolipid catabolism"/>
</dbReference>
<dbReference type="BioGRID-ORCS" id="67902">
    <property type="hits" value="0 hits in 78 CRISPR screens"/>
</dbReference>
<dbReference type="PRO" id="PR:Q8BPG6"/>
<dbReference type="Proteomes" id="UP000000589">
    <property type="component" value="Chromosome 5"/>
</dbReference>
<dbReference type="RNAct" id="Q8BPG6">
    <property type="molecule type" value="protein"/>
</dbReference>
<dbReference type="Bgee" id="ENSMUSG00000025538">
    <property type="expression patterns" value="Expressed in manus and 219 other cell types or tissues"/>
</dbReference>
<dbReference type="ExpressionAtlas" id="Q8BPG6">
    <property type="expression patterns" value="baseline and differential"/>
</dbReference>
<dbReference type="GO" id="GO:0005788">
    <property type="term" value="C:endoplasmic reticulum lumen"/>
    <property type="evidence" value="ECO:0000314"/>
    <property type="project" value="MGI"/>
</dbReference>
<dbReference type="GO" id="GO:0004857">
    <property type="term" value="F:enzyme inhibitor activity"/>
    <property type="evidence" value="ECO:0000266"/>
    <property type="project" value="MGI"/>
</dbReference>
<dbReference type="GO" id="GO:0042802">
    <property type="term" value="F:identical protein binding"/>
    <property type="evidence" value="ECO:0000353"/>
    <property type="project" value="MGI"/>
</dbReference>
<dbReference type="GO" id="GO:0046872">
    <property type="term" value="F:metal ion binding"/>
    <property type="evidence" value="ECO:0007669"/>
    <property type="project" value="UniProtKB-KW"/>
</dbReference>
<dbReference type="GO" id="GO:1901874">
    <property type="term" value="P:negative regulation of post-translational protein modification"/>
    <property type="evidence" value="ECO:0000266"/>
    <property type="project" value="MGI"/>
</dbReference>
<dbReference type="FunFam" id="3.90.1580.10:FF:000002">
    <property type="entry name" value="sulfatase-modifying factor 2 isoform X1"/>
    <property type="match status" value="1"/>
</dbReference>
<dbReference type="Gene3D" id="3.90.1580.10">
    <property type="entry name" value="paralog of FGE (formylglycine-generating enzyme)"/>
    <property type="match status" value="1"/>
</dbReference>
<dbReference type="InterPro" id="IPR016187">
    <property type="entry name" value="CTDL_fold"/>
</dbReference>
<dbReference type="InterPro" id="IPR051043">
    <property type="entry name" value="Sulfatase_Mod_Factor_Kinase"/>
</dbReference>
<dbReference type="InterPro" id="IPR005532">
    <property type="entry name" value="SUMF_dom"/>
</dbReference>
<dbReference type="InterPro" id="IPR042095">
    <property type="entry name" value="SUMF_sf"/>
</dbReference>
<dbReference type="PANTHER" id="PTHR23150:SF33">
    <property type="entry name" value="INACTIVE C-ALPHA-FORMYLGLYCINE-GENERATING ENZYME 2"/>
    <property type="match status" value="1"/>
</dbReference>
<dbReference type="PANTHER" id="PTHR23150">
    <property type="entry name" value="SULFATASE MODIFYING FACTOR 1, 2"/>
    <property type="match status" value="1"/>
</dbReference>
<dbReference type="Pfam" id="PF03781">
    <property type="entry name" value="FGE-sulfatase"/>
    <property type="match status" value="1"/>
</dbReference>
<dbReference type="SUPFAM" id="SSF56436">
    <property type="entry name" value="C-type lectin-like"/>
    <property type="match status" value="1"/>
</dbReference>
<keyword id="KW-0106">Calcium</keyword>
<keyword id="KW-1015">Disulfide bond</keyword>
<keyword id="KW-0256">Endoplasmic reticulum</keyword>
<keyword id="KW-0325">Glycoprotein</keyword>
<keyword id="KW-0479">Metal-binding</keyword>
<keyword id="KW-1185">Reference proteome</keyword>
<keyword id="KW-0732">Signal</keyword>
<sequence length="308" mass="34737">MRSEFWFPSMGSLLPPVLLLWLLSCPRLQLGHAQDPAMVHLPGGRFLMGTDAPDGRDGEGPAREVTVKPFAIDIFPVTNKDFREFVREKKYQTEAEAFGWSFVFEDFVSPELRKQENLMPAVHWWQPVPKAFWRQPAGPGSGIREKLELPVVHVSWNDAGAYCAWRGRRLPTEEEWEFAARGGLKGQVYPWGNRFQPNRTNLWQGKFPKGDKAEDGFHGLSPVNAFPPQNNYGLYDLMGNVWEWTASTYQPAGQDMRVLRGASWIDTADGSANHRARVTTRMGNTPDSASDNLGFRCASSAGRPKEDL</sequence>
<accession>Q8BPG6</accession>
<accession>Q3TZL1</accession>
<accession>Q3UUL0</accession>
<accession>Q9CZ47</accession>
<reference key="1">
    <citation type="journal article" date="2005" name="Science">
        <title>The transcriptional landscape of the mammalian genome.</title>
        <authorList>
            <person name="Carninci P."/>
            <person name="Kasukawa T."/>
            <person name="Katayama S."/>
            <person name="Gough J."/>
            <person name="Frith M.C."/>
            <person name="Maeda N."/>
            <person name="Oyama R."/>
            <person name="Ravasi T."/>
            <person name="Lenhard B."/>
            <person name="Wells C."/>
            <person name="Kodzius R."/>
            <person name="Shimokawa K."/>
            <person name="Bajic V.B."/>
            <person name="Brenner S.E."/>
            <person name="Batalov S."/>
            <person name="Forrest A.R."/>
            <person name="Zavolan M."/>
            <person name="Davis M.J."/>
            <person name="Wilming L.G."/>
            <person name="Aidinis V."/>
            <person name="Allen J.E."/>
            <person name="Ambesi-Impiombato A."/>
            <person name="Apweiler R."/>
            <person name="Aturaliya R.N."/>
            <person name="Bailey T.L."/>
            <person name="Bansal M."/>
            <person name="Baxter L."/>
            <person name="Beisel K.W."/>
            <person name="Bersano T."/>
            <person name="Bono H."/>
            <person name="Chalk A.M."/>
            <person name="Chiu K.P."/>
            <person name="Choudhary V."/>
            <person name="Christoffels A."/>
            <person name="Clutterbuck D.R."/>
            <person name="Crowe M.L."/>
            <person name="Dalla E."/>
            <person name="Dalrymple B.P."/>
            <person name="de Bono B."/>
            <person name="Della Gatta G."/>
            <person name="di Bernardo D."/>
            <person name="Down T."/>
            <person name="Engstrom P."/>
            <person name="Fagiolini M."/>
            <person name="Faulkner G."/>
            <person name="Fletcher C.F."/>
            <person name="Fukushima T."/>
            <person name="Furuno M."/>
            <person name="Futaki S."/>
            <person name="Gariboldi M."/>
            <person name="Georgii-Hemming P."/>
            <person name="Gingeras T.R."/>
            <person name="Gojobori T."/>
            <person name="Green R.E."/>
            <person name="Gustincich S."/>
            <person name="Harbers M."/>
            <person name="Hayashi Y."/>
            <person name="Hensch T.K."/>
            <person name="Hirokawa N."/>
            <person name="Hill D."/>
            <person name="Huminiecki L."/>
            <person name="Iacono M."/>
            <person name="Ikeo K."/>
            <person name="Iwama A."/>
            <person name="Ishikawa T."/>
            <person name="Jakt M."/>
            <person name="Kanapin A."/>
            <person name="Katoh M."/>
            <person name="Kawasawa Y."/>
            <person name="Kelso J."/>
            <person name="Kitamura H."/>
            <person name="Kitano H."/>
            <person name="Kollias G."/>
            <person name="Krishnan S.P."/>
            <person name="Kruger A."/>
            <person name="Kummerfeld S.K."/>
            <person name="Kurochkin I.V."/>
            <person name="Lareau L.F."/>
            <person name="Lazarevic D."/>
            <person name="Lipovich L."/>
            <person name="Liu J."/>
            <person name="Liuni S."/>
            <person name="McWilliam S."/>
            <person name="Madan Babu M."/>
            <person name="Madera M."/>
            <person name="Marchionni L."/>
            <person name="Matsuda H."/>
            <person name="Matsuzawa S."/>
            <person name="Miki H."/>
            <person name="Mignone F."/>
            <person name="Miyake S."/>
            <person name="Morris K."/>
            <person name="Mottagui-Tabar S."/>
            <person name="Mulder N."/>
            <person name="Nakano N."/>
            <person name="Nakauchi H."/>
            <person name="Ng P."/>
            <person name="Nilsson R."/>
            <person name="Nishiguchi S."/>
            <person name="Nishikawa S."/>
            <person name="Nori F."/>
            <person name="Ohara O."/>
            <person name="Okazaki Y."/>
            <person name="Orlando V."/>
            <person name="Pang K.C."/>
            <person name="Pavan W.J."/>
            <person name="Pavesi G."/>
            <person name="Pesole G."/>
            <person name="Petrovsky N."/>
            <person name="Piazza S."/>
            <person name="Reed J."/>
            <person name="Reid J.F."/>
            <person name="Ring B.Z."/>
            <person name="Ringwald M."/>
            <person name="Rost B."/>
            <person name="Ruan Y."/>
            <person name="Salzberg S.L."/>
            <person name="Sandelin A."/>
            <person name="Schneider C."/>
            <person name="Schoenbach C."/>
            <person name="Sekiguchi K."/>
            <person name="Semple C.A."/>
            <person name="Seno S."/>
            <person name="Sessa L."/>
            <person name="Sheng Y."/>
            <person name="Shibata Y."/>
            <person name="Shimada H."/>
            <person name="Shimada K."/>
            <person name="Silva D."/>
            <person name="Sinclair B."/>
            <person name="Sperling S."/>
            <person name="Stupka E."/>
            <person name="Sugiura K."/>
            <person name="Sultana R."/>
            <person name="Takenaka Y."/>
            <person name="Taki K."/>
            <person name="Tammoja K."/>
            <person name="Tan S.L."/>
            <person name="Tang S."/>
            <person name="Taylor M.S."/>
            <person name="Tegner J."/>
            <person name="Teichmann S.A."/>
            <person name="Ueda H.R."/>
            <person name="van Nimwegen E."/>
            <person name="Verardo R."/>
            <person name="Wei C.L."/>
            <person name="Yagi K."/>
            <person name="Yamanishi H."/>
            <person name="Zabarovsky E."/>
            <person name="Zhu S."/>
            <person name="Zimmer A."/>
            <person name="Hide W."/>
            <person name="Bult C."/>
            <person name="Grimmond S.M."/>
            <person name="Teasdale R.D."/>
            <person name="Liu E.T."/>
            <person name="Brusic V."/>
            <person name="Quackenbush J."/>
            <person name="Wahlestedt C."/>
            <person name="Mattick J.S."/>
            <person name="Hume D.A."/>
            <person name="Kai C."/>
            <person name="Sasaki D."/>
            <person name="Tomaru Y."/>
            <person name="Fukuda S."/>
            <person name="Kanamori-Katayama M."/>
            <person name="Suzuki M."/>
            <person name="Aoki J."/>
            <person name="Arakawa T."/>
            <person name="Iida J."/>
            <person name="Imamura K."/>
            <person name="Itoh M."/>
            <person name="Kato T."/>
            <person name="Kawaji H."/>
            <person name="Kawagashira N."/>
            <person name="Kawashima T."/>
            <person name="Kojima M."/>
            <person name="Kondo S."/>
            <person name="Konno H."/>
            <person name="Nakano K."/>
            <person name="Ninomiya N."/>
            <person name="Nishio T."/>
            <person name="Okada M."/>
            <person name="Plessy C."/>
            <person name="Shibata K."/>
            <person name="Shiraki T."/>
            <person name="Suzuki S."/>
            <person name="Tagami M."/>
            <person name="Waki K."/>
            <person name="Watahiki A."/>
            <person name="Okamura-Oho Y."/>
            <person name="Suzuki H."/>
            <person name="Kawai J."/>
            <person name="Hayashizaki Y."/>
        </authorList>
    </citation>
    <scope>NUCLEOTIDE SEQUENCE [LARGE SCALE MRNA]</scope>
    <source>
        <strain>C57BL/6J</strain>
        <tissue>Embryo</tissue>
        <tissue>Hypothalamus</tissue>
    </source>
</reference>
<reference key="2">
    <citation type="submission" date="2005-09" db="EMBL/GenBank/DDBJ databases">
        <authorList>
            <person name="Mural R.J."/>
            <person name="Adams M.D."/>
            <person name="Myers E.W."/>
            <person name="Smith H.O."/>
            <person name="Venter J.C."/>
        </authorList>
    </citation>
    <scope>NUCLEOTIDE SEQUENCE [LARGE SCALE GENOMIC DNA]</scope>
</reference>
<reference key="3">
    <citation type="journal article" date="2010" name="Cell">
        <title>A tissue-specific atlas of mouse protein phosphorylation and expression.</title>
        <authorList>
            <person name="Huttlin E.L."/>
            <person name="Jedrychowski M.P."/>
            <person name="Elias J.E."/>
            <person name="Goswami T."/>
            <person name="Rad R."/>
            <person name="Beausoleil S.A."/>
            <person name="Villen J."/>
            <person name="Haas W."/>
            <person name="Sowa M.E."/>
            <person name="Gygi S.P."/>
        </authorList>
    </citation>
    <scope>IDENTIFICATION BY MASS SPECTROMETRY [LARGE SCALE ANALYSIS]</scope>
    <source>
        <tissue>Liver</tissue>
        <tissue>Lung</tissue>
    </source>
</reference>
<evidence type="ECO:0000250" key="1">
    <source>
        <dbReference type="UniProtKB" id="Q8NBJ7"/>
    </source>
</evidence>
<evidence type="ECO:0000255" key="2"/>
<evidence type="ECO:0000255" key="3">
    <source>
        <dbReference type="PROSITE-ProRule" id="PRU00498"/>
    </source>
</evidence>
<evidence type="ECO:0000256" key="4">
    <source>
        <dbReference type="SAM" id="MobiDB-lite"/>
    </source>
</evidence>
<evidence type="ECO:0000305" key="5"/>
<evidence type="ECO:0000312" key="6">
    <source>
        <dbReference type="MGI" id="MGI:1915152"/>
    </source>
</evidence>
<feature type="signal peptide" evidence="2">
    <location>
        <begin position="1"/>
        <end position="33"/>
    </location>
</feature>
<feature type="chain" id="PRO_0000033460" description="Inactive C-alpha-formylglycine-generating enzyme 2">
    <location>
        <begin position="34"/>
        <end position="308"/>
    </location>
</feature>
<feature type="region of interest" description="Disordered" evidence="4">
    <location>
        <begin position="281"/>
        <end position="308"/>
    </location>
</feature>
<feature type="short sequence motif" description="Non-canonical ER retention motif" evidence="1">
    <location>
        <begin position="305"/>
        <end position="308"/>
    </location>
</feature>
<feature type="compositionally biased region" description="Polar residues" evidence="4">
    <location>
        <begin position="281"/>
        <end position="291"/>
    </location>
</feature>
<feature type="binding site" evidence="1">
    <location>
        <position position="201"/>
    </location>
    <ligand>
        <name>Ca(2+)</name>
        <dbReference type="ChEBI" id="CHEBI:29108"/>
        <label>1</label>
    </ligand>
</feature>
<feature type="binding site" evidence="1">
    <location>
        <position position="202"/>
    </location>
    <ligand>
        <name>Ca(2+)</name>
        <dbReference type="ChEBI" id="CHEBI:29108"/>
        <label>1</label>
    </ligand>
</feature>
<feature type="binding site" evidence="1">
    <location>
        <position position="215"/>
    </location>
    <ligand>
        <name>Ca(2+)</name>
        <dbReference type="ChEBI" id="CHEBI:29108"/>
        <label>1</label>
    </ligand>
</feature>
<feature type="binding site" evidence="1">
    <location>
        <position position="217"/>
    </location>
    <ligand>
        <name>Ca(2+)</name>
        <dbReference type="ChEBI" id="CHEBI:29108"/>
        <label>1</label>
    </ligand>
</feature>
<feature type="binding site" evidence="1">
    <location>
        <position position="236"/>
    </location>
    <ligand>
        <name>Ca(2+)</name>
        <dbReference type="ChEBI" id="CHEBI:29108"/>
        <label>2</label>
    </ligand>
</feature>
<feature type="binding site" evidence="1">
    <location>
        <position position="239"/>
    </location>
    <ligand>
        <name>Ca(2+)</name>
        <dbReference type="ChEBI" id="CHEBI:29108"/>
        <label>2</label>
    </ligand>
</feature>
<feature type="binding site" evidence="1">
    <location>
        <position position="241"/>
    </location>
    <ligand>
        <name>Ca(2+)</name>
        <dbReference type="ChEBI" id="CHEBI:29108"/>
        <label>2</label>
    </ligand>
</feature>
<feature type="binding site" evidence="1">
    <location>
        <position position="243"/>
    </location>
    <ligand>
        <name>Ca(2+)</name>
        <dbReference type="ChEBI" id="CHEBI:29108"/>
        <label>2</label>
    </ligand>
</feature>
<feature type="glycosylation site" description="N-linked (GlcNAc...) asparagine" evidence="3">
    <location>
        <position position="198"/>
    </location>
</feature>
<feature type="disulfide bond" evidence="1">
    <location>
        <begin position="163"/>
        <end position="297"/>
    </location>
</feature>
<feature type="sequence conflict" description="In Ref. 1; BAE23615." evidence="5" ref="1">
    <original>R</original>
    <variation>G</variation>
    <location>
        <position position="2"/>
    </location>
</feature>
<feature type="sequence conflict" description="In Ref. 1; BAC36127." evidence="5" ref="1">
    <original>W</original>
    <variation>R</variation>
    <location>
        <position position="21"/>
    </location>
</feature>
<name>SUMF2_MOUSE</name>